<accession>Q1QDQ5</accession>
<proteinExistence type="inferred from homology"/>
<dbReference type="EC" id="4.98.1.1" evidence="1"/>
<dbReference type="EMBL" id="CP000323">
    <property type="protein sequence ID" value="ABE74198.1"/>
    <property type="molecule type" value="Genomic_DNA"/>
</dbReference>
<dbReference type="RefSeq" id="WP_011512783.1">
    <property type="nucleotide sequence ID" value="NC_007969.1"/>
</dbReference>
<dbReference type="SMR" id="Q1QDQ5"/>
<dbReference type="STRING" id="335284.Pcryo_0415"/>
<dbReference type="KEGG" id="pcr:Pcryo_0415"/>
<dbReference type="eggNOG" id="COG0276">
    <property type="taxonomic scope" value="Bacteria"/>
</dbReference>
<dbReference type="HOGENOM" id="CLU_018884_0_0_6"/>
<dbReference type="UniPathway" id="UPA00252">
    <property type="reaction ID" value="UER00325"/>
</dbReference>
<dbReference type="Proteomes" id="UP000002425">
    <property type="component" value="Chromosome"/>
</dbReference>
<dbReference type="GO" id="GO:0005737">
    <property type="term" value="C:cytoplasm"/>
    <property type="evidence" value="ECO:0007669"/>
    <property type="project" value="UniProtKB-SubCell"/>
</dbReference>
<dbReference type="GO" id="GO:0004325">
    <property type="term" value="F:ferrochelatase activity"/>
    <property type="evidence" value="ECO:0007669"/>
    <property type="project" value="UniProtKB-UniRule"/>
</dbReference>
<dbReference type="GO" id="GO:0046872">
    <property type="term" value="F:metal ion binding"/>
    <property type="evidence" value="ECO:0007669"/>
    <property type="project" value="UniProtKB-KW"/>
</dbReference>
<dbReference type="GO" id="GO:0006783">
    <property type="term" value="P:heme biosynthetic process"/>
    <property type="evidence" value="ECO:0007669"/>
    <property type="project" value="UniProtKB-UniRule"/>
</dbReference>
<dbReference type="CDD" id="cd00419">
    <property type="entry name" value="Ferrochelatase_C"/>
    <property type="match status" value="1"/>
</dbReference>
<dbReference type="CDD" id="cd03411">
    <property type="entry name" value="Ferrochelatase_N"/>
    <property type="match status" value="1"/>
</dbReference>
<dbReference type="FunFam" id="3.40.50.1400:FF:000002">
    <property type="entry name" value="Ferrochelatase"/>
    <property type="match status" value="1"/>
</dbReference>
<dbReference type="Gene3D" id="3.40.50.1400">
    <property type="match status" value="2"/>
</dbReference>
<dbReference type="HAMAP" id="MF_00323">
    <property type="entry name" value="Ferrochelatase"/>
    <property type="match status" value="1"/>
</dbReference>
<dbReference type="InterPro" id="IPR001015">
    <property type="entry name" value="Ferrochelatase"/>
</dbReference>
<dbReference type="InterPro" id="IPR019772">
    <property type="entry name" value="Ferrochelatase_AS"/>
</dbReference>
<dbReference type="InterPro" id="IPR033644">
    <property type="entry name" value="Ferrochelatase_C"/>
</dbReference>
<dbReference type="InterPro" id="IPR033659">
    <property type="entry name" value="Ferrochelatase_N"/>
</dbReference>
<dbReference type="NCBIfam" id="TIGR00109">
    <property type="entry name" value="hemH"/>
    <property type="match status" value="1"/>
</dbReference>
<dbReference type="PANTHER" id="PTHR11108">
    <property type="entry name" value="FERROCHELATASE"/>
    <property type="match status" value="1"/>
</dbReference>
<dbReference type="PANTHER" id="PTHR11108:SF1">
    <property type="entry name" value="FERROCHELATASE, MITOCHONDRIAL"/>
    <property type="match status" value="1"/>
</dbReference>
<dbReference type="Pfam" id="PF00762">
    <property type="entry name" value="Ferrochelatase"/>
    <property type="match status" value="1"/>
</dbReference>
<dbReference type="SUPFAM" id="SSF53800">
    <property type="entry name" value="Chelatase"/>
    <property type="match status" value="1"/>
</dbReference>
<dbReference type="PROSITE" id="PS00534">
    <property type="entry name" value="FERROCHELATASE"/>
    <property type="match status" value="1"/>
</dbReference>
<protein>
    <recommendedName>
        <fullName evidence="1">Ferrochelatase</fullName>
        <ecNumber evidence="1">4.98.1.1</ecNumber>
    </recommendedName>
    <alternativeName>
        <fullName evidence="1">Heme synthase</fullName>
    </alternativeName>
    <alternativeName>
        <fullName evidence="1">Protoheme ferro-lyase</fullName>
    </alternativeName>
</protein>
<sequence>MKPDLPPRIAVLLVNLGTPDEPTAPAVRRYLKQFLSDPRVIEIPKFLWAIILNLFVLPSRPKRVAEAYASIWDGDSPMRNILNAQVEMLDKRLADRAAPFRVSVHAAMSYGNPGLPDVMDQLRSEGVDHFVMLPVFPQYSATSTGAVYDAITKWSLKQRNLPNITIVKDYFAHPLYIKALADSIRRFQAVHGKPEKLMFSFHGIPQPYADKGDPYPKRCKCTAAQVAHELGLKPDEWIISFQSRFGKQEWIKPYTDVVLKEWGSSGVRSVQILSPAFSADCLETLEELAIENRETFLHAGGQEYHYIPALNADEAHIDLLEAMSAPLVKGWAGTLDGWA</sequence>
<comment type="function">
    <text evidence="1">Catalyzes the ferrous insertion into protoporphyrin IX.</text>
</comment>
<comment type="catalytic activity">
    <reaction evidence="1">
        <text>heme b + 2 H(+) = protoporphyrin IX + Fe(2+)</text>
        <dbReference type="Rhea" id="RHEA:22584"/>
        <dbReference type="ChEBI" id="CHEBI:15378"/>
        <dbReference type="ChEBI" id="CHEBI:29033"/>
        <dbReference type="ChEBI" id="CHEBI:57306"/>
        <dbReference type="ChEBI" id="CHEBI:60344"/>
        <dbReference type="EC" id="4.98.1.1"/>
    </reaction>
</comment>
<comment type="pathway">
    <text evidence="1">Porphyrin-containing compound metabolism; protoheme biosynthesis; protoheme from protoporphyrin-IX: step 1/1.</text>
</comment>
<comment type="subcellular location">
    <subcellularLocation>
        <location evidence="1">Cytoplasm</location>
    </subcellularLocation>
</comment>
<comment type="similarity">
    <text evidence="1">Belongs to the ferrochelatase family.</text>
</comment>
<organism>
    <name type="scientific">Psychrobacter cryohalolentis (strain ATCC BAA-1226 / DSM 17306 / VKM B-2378 / K5)</name>
    <dbReference type="NCBI Taxonomy" id="335284"/>
    <lineage>
        <taxon>Bacteria</taxon>
        <taxon>Pseudomonadati</taxon>
        <taxon>Pseudomonadota</taxon>
        <taxon>Gammaproteobacteria</taxon>
        <taxon>Moraxellales</taxon>
        <taxon>Moraxellaceae</taxon>
        <taxon>Psychrobacter</taxon>
    </lineage>
</organism>
<gene>
    <name evidence="1" type="primary">hemH</name>
    <name type="ordered locus">Pcryo_0415</name>
</gene>
<reference key="1">
    <citation type="submission" date="2006-03" db="EMBL/GenBank/DDBJ databases">
        <title>Complete sequence of chromosome of Psychrobacter cryohalolentis K5.</title>
        <authorList>
            <consortium name="US DOE Joint Genome Institute"/>
            <person name="Copeland A."/>
            <person name="Lucas S."/>
            <person name="Lapidus A."/>
            <person name="Barry K."/>
            <person name="Detter J.C."/>
            <person name="Glavina T."/>
            <person name="Hammon N."/>
            <person name="Israni S."/>
            <person name="Dalin E."/>
            <person name="Tice H."/>
            <person name="Pitluck S."/>
            <person name="Brettin T."/>
            <person name="Bruce D."/>
            <person name="Han C."/>
            <person name="Tapia R."/>
            <person name="Sims D.R."/>
            <person name="Gilna P."/>
            <person name="Schmutz J."/>
            <person name="Larimer F."/>
            <person name="Land M."/>
            <person name="Hauser L."/>
            <person name="Kyrpides N."/>
            <person name="Kim E."/>
            <person name="Richardson P."/>
        </authorList>
    </citation>
    <scope>NUCLEOTIDE SEQUENCE [LARGE SCALE GENOMIC DNA]</scope>
    <source>
        <strain>ATCC BAA-1226 / DSM 17306 / VKM B-2378 / K5</strain>
    </source>
</reference>
<evidence type="ECO:0000255" key="1">
    <source>
        <dbReference type="HAMAP-Rule" id="MF_00323"/>
    </source>
</evidence>
<name>HEMH_PSYCK</name>
<feature type="chain" id="PRO_1000019354" description="Ferrochelatase">
    <location>
        <begin position="1"/>
        <end position="339"/>
    </location>
</feature>
<feature type="binding site" evidence="1">
    <location>
        <position position="202"/>
    </location>
    <ligand>
        <name>Fe cation</name>
        <dbReference type="ChEBI" id="CHEBI:24875"/>
    </ligand>
</feature>
<feature type="binding site" evidence="1">
    <location>
        <position position="283"/>
    </location>
    <ligand>
        <name>Fe cation</name>
        <dbReference type="ChEBI" id="CHEBI:24875"/>
    </ligand>
</feature>
<keyword id="KW-0963">Cytoplasm</keyword>
<keyword id="KW-0350">Heme biosynthesis</keyword>
<keyword id="KW-0408">Iron</keyword>
<keyword id="KW-0456">Lyase</keyword>
<keyword id="KW-0479">Metal-binding</keyword>
<keyword id="KW-0627">Porphyrin biosynthesis</keyword>